<evidence type="ECO:0000250" key="1"/>
<protein>
    <recommendedName>
        <fullName>Nucleolar protein 11-like</fullName>
    </recommendedName>
</protein>
<accession>Q4V9P9</accession>
<gene>
    <name type="primary">nol11</name>
    <name type="ORF">wu:fb30e03</name>
    <name type="ORF">zgc:109901</name>
</gene>
<sequence>MATLYEEYTLCGVGPDKNSSSSGILGIELGKDVDHIIVTNSSRAVTVYKVSDQKPTGSWTVKQGQLITCPAVYNTKSQEYVVVTDNKVIRVWKEDDVNMEKAFKATVSSDVLRVIAASDSEPVVLFSCGAVMFLDSLLASPQQTIEGVLTEEEFIRWSTVVGAEHQLVLLFCTEKRGEHYLYAQRFNPNTVVKHRFETEPGPFAPISFSATCRGSNIHLQYLYMSGRIYESVLPLRSSVSEAEGVQALPRSLCLSLPLGEQELTSGAAIVLDEAHVAIVGFPHPSAGAGKDYLCIWNKHFQTLQACKELAGTIYSQIWCYSGKLYIPHGKILSVISFECQKSSLAAAMGKLKQTNQSESKSHTPLSSWTALPHNDSINAAKVKSRMSTRNASNVKSPLTVDQLIDHIKTAVVEDVQSAVGEFIHQTPQTDLQLAAGKVTMVLVSRSQTDDSFYPQRAFLQLLDTRYLCYSVCPELLSLAMAKRDFQLCQIAFQLFPDIPEAVTCAYLKTILSTPDSEMETLTLDTESLIIMKEMSPAQSQMEEGEQQNENGVSSSKQQRDFLSMDMKCPVGLHKGVLLNDVLQTAYSDKPLLQHLKDLTVLQVMVFLQYLHFLYLKYSQDVHKQIRALRIPSISQVIDWASLILDAHFTVLAVAPEAKSLVSDLHKFTRSQVKLYAELGKIEGSLQSLKKPKSTEHTGVYSIEVIELF</sequence>
<dbReference type="EMBL" id="BC096784">
    <property type="protein sequence ID" value="AAH96784.1"/>
    <property type="molecule type" value="mRNA"/>
</dbReference>
<dbReference type="RefSeq" id="NP_001025234.1">
    <property type="nucleotide sequence ID" value="NM_001030063.1"/>
</dbReference>
<dbReference type="SMR" id="Q4V9P9"/>
<dbReference type="FunCoup" id="Q4V9P9">
    <property type="interactions" value="2328"/>
</dbReference>
<dbReference type="STRING" id="7955.ENSDARP00000032159"/>
<dbReference type="PaxDb" id="7955-ENSDARP00000032159"/>
<dbReference type="GeneID" id="321700"/>
<dbReference type="KEGG" id="dre:321700"/>
<dbReference type="AGR" id="ZFIN:ZDB-GENE-030131-419"/>
<dbReference type="CTD" id="25926"/>
<dbReference type="ZFIN" id="ZDB-GENE-030131-419">
    <property type="gene designation" value="nol11"/>
</dbReference>
<dbReference type="eggNOG" id="ENOG502SB74">
    <property type="taxonomic scope" value="Eukaryota"/>
</dbReference>
<dbReference type="InParanoid" id="Q4V9P9"/>
<dbReference type="OrthoDB" id="6502630at2759"/>
<dbReference type="PhylomeDB" id="Q4V9P9"/>
<dbReference type="PRO" id="PR:Q4V9P9"/>
<dbReference type="Proteomes" id="UP000000437">
    <property type="component" value="Chromosome 6"/>
</dbReference>
<dbReference type="GO" id="GO:0005730">
    <property type="term" value="C:nucleolus"/>
    <property type="evidence" value="ECO:0000250"/>
    <property type="project" value="UniProtKB"/>
</dbReference>
<dbReference type="GO" id="GO:0030490">
    <property type="term" value="P:maturation of SSU-rRNA"/>
    <property type="evidence" value="ECO:0000250"/>
    <property type="project" value="UniProtKB"/>
</dbReference>
<dbReference type="GO" id="GO:1901838">
    <property type="term" value="P:positive regulation of transcription of nucleolar large rRNA by RNA polymerase I"/>
    <property type="evidence" value="ECO:0000250"/>
    <property type="project" value="UniProtKB"/>
</dbReference>
<dbReference type="InterPro" id="IPR042859">
    <property type="entry name" value="NOL11"/>
</dbReference>
<dbReference type="InterPro" id="IPR048897">
    <property type="entry name" value="Nol11_C"/>
</dbReference>
<dbReference type="InterPro" id="IPR012584">
    <property type="entry name" value="NOL11_N"/>
</dbReference>
<dbReference type="InterPro" id="IPR036322">
    <property type="entry name" value="WD40_repeat_dom_sf"/>
</dbReference>
<dbReference type="PANTHER" id="PTHR15633">
    <property type="entry name" value="NUCLEOLAR PROTEIN 11"/>
    <property type="match status" value="1"/>
</dbReference>
<dbReference type="PANTHER" id="PTHR15633:SF2">
    <property type="entry name" value="NUCLEOLAR PROTEIN 11"/>
    <property type="match status" value="1"/>
</dbReference>
<dbReference type="Pfam" id="PF20998">
    <property type="entry name" value="Nol11_C"/>
    <property type="match status" value="1"/>
</dbReference>
<dbReference type="Pfam" id="PF08168">
    <property type="entry name" value="NOL11_N"/>
    <property type="match status" value="1"/>
</dbReference>
<dbReference type="SUPFAM" id="SSF50978">
    <property type="entry name" value="WD40 repeat-like"/>
    <property type="match status" value="1"/>
</dbReference>
<comment type="function">
    <text evidence="1">Ribosome biogenesis factor. May be required for both optimal rDNA transcription and pre-rRNA processing (By similarity).</text>
</comment>
<comment type="subcellular location">
    <subcellularLocation>
        <location evidence="1">Nucleus</location>
        <location evidence="1">Nucleolus</location>
    </subcellularLocation>
</comment>
<reference key="1">
    <citation type="submission" date="2005-06" db="EMBL/GenBank/DDBJ databases">
        <authorList>
            <consortium name="NIH - Zebrafish Gene Collection (ZGC) project"/>
        </authorList>
    </citation>
    <scope>NUCLEOTIDE SEQUENCE [LARGE SCALE MRNA]</scope>
    <source>
        <tissue>Embryo</tissue>
    </source>
</reference>
<keyword id="KW-0010">Activator</keyword>
<keyword id="KW-0539">Nucleus</keyword>
<keyword id="KW-1185">Reference proteome</keyword>
<keyword id="KW-0698">rRNA processing</keyword>
<keyword id="KW-0804">Transcription</keyword>
<keyword id="KW-0805">Transcription regulation</keyword>
<feature type="chain" id="PRO_0000096929" description="Nucleolar protein 11-like">
    <location>
        <begin position="1"/>
        <end position="708"/>
    </location>
</feature>
<organism>
    <name type="scientific">Danio rerio</name>
    <name type="common">Zebrafish</name>
    <name type="synonym">Brachydanio rerio</name>
    <dbReference type="NCBI Taxonomy" id="7955"/>
    <lineage>
        <taxon>Eukaryota</taxon>
        <taxon>Metazoa</taxon>
        <taxon>Chordata</taxon>
        <taxon>Craniata</taxon>
        <taxon>Vertebrata</taxon>
        <taxon>Euteleostomi</taxon>
        <taxon>Actinopterygii</taxon>
        <taxon>Neopterygii</taxon>
        <taxon>Teleostei</taxon>
        <taxon>Ostariophysi</taxon>
        <taxon>Cypriniformes</taxon>
        <taxon>Danionidae</taxon>
        <taxon>Danioninae</taxon>
        <taxon>Danio</taxon>
    </lineage>
</organism>
<name>NOL11_DANRE</name>
<proteinExistence type="evidence at transcript level"/>